<evidence type="ECO:0000255" key="1">
    <source>
        <dbReference type="HAMAP-Rule" id="MF_00163"/>
    </source>
</evidence>
<organism>
    <name type="scientific">Streptococcus pyogenes serotype M3 (strain SSI-1)</name>
    <dbReference type="NCBI Taxonomy" id="193567"/>
    <lineage>
        <taxon>Bacteria</taxon>
        <taxon>Bacillati</taxon>
        <taxon>Bacillota</taxon>
        <taxon>Bacilli</taxon>
        <taxon>Lactobacillales</taxon>
        <taxon>Streptococcaceae</taxon>
        <taxon>Streptococcus</taxon>
    </lineage>
</organism>
<protein>
    <recommendedName>
        <fullName evidence="1">Peptide deformylase</fullName>
        <shortName evidence="1">PDF</shortName>
        <ecNumber evidence="1">3.5.1.88</ecNumber>
    </recommendedName>
    <alternativeName>
        <fullName evidence="1">Polypeptide deformylase</fullName>
    </alternativeName>
</protein>
<name>DEF_STRPQ</name>
<sequence length="204" mass="22862">MSAQDKLIKPSHLITMDDIIREGNPTLRAVAKEVSLPLCDEDILLGEKMMQFLKHSQDPVMAEKLGLRAGVGLAAPQIDVSKRIIAVLVPNLPDKEGNPPKEAYSWQEVLYNPKIVSHSVQDAALSDGEGCLSVDRVVEGYVVRHARVTVDYYDKEGQQHRIKLKGYNAIVVQHEIDHINGVLFYDRINAKNPFETKEELLILD</sequence>
<comment type="function">
    <text evidence="1">Removes the formyl group from the N-terminal Met of newly synthesized proteins. Requires at least a dipeptide for an efficient rate of reaction. N-terminal L-methionine is a prerequisite for activity but the enzyme has broad specificity at other positions.</text>
</comment>
<comment type="catalytic activity">
    <reaction evidence="1">
        <text>N-terminal N-formyl-L-methionyl-[peptide] + H2O = N-terminal L-methionyl-[peptide] + formate</text>
        <dbReference type="Rhea" id="RHEA:24420"/>
        <dbReference type="Rhea" id="RHEA-COMP:10639"/>
        <dbReference type="Rhea" id="RHEA-COMP:10640"/>
        <dbReference type="ChEBI" id="CHEBI:15377"/>
        <dbReference type="ChEBI" id="CHEBI:15740"/>
        <dbReference type="ChEBI" id="CHEBI:49298"/>
        <dbReference type="ChEBI" id="CHEBI:64731"/>
        <dbReference type="EC" id="3.5.1.88"/>
    </reaction>
</comment>
<comment type="cofactor">
    <cofactor evidence="1">
        <name>Fe(2+)</name>
        <dbReference type="ChEBI" id="CHEBI:29033"/>
    </cofactor>
    <text evidence="1">Binds 1 Fe(2+) ion.</text>
</comment>
<comment type="similarity">
    <text evidence="1">Belongs to the polypeptide deformylase family.</text>
</comment>
<gene>
    <name evidence="1" type="primary">def</name>
    <name type="ordered locus">SPs1686</name>
</gene>
<proteinExistence type="inferred from homology"/>
<accession>P0DC97</accession>
<accession>P68772</accession>
<accession>P82590</accession>
<accession>Q99XY7</accession>
<dbReference type="EC" id="3.5.1.88" evidence="1"/>
<dbReference type="EMBL" id="BA000034">
    <property type="protein sequence ID" value="BAC64781.1"/>
    <property type="molecule type" value="Genomic_DNA"/>
</dbReference>
<dbReference type="RefSeq" id="WP_002982624.1">
    <property type="nucleotide sequence ID" value="NC_004606.1"/>
</dbReference>
<dbReference type="SMR" id="P0DC97"/>
<dbReference type="GeneID" id="69901455"/>
<dbReference type="KEGG" id="sps:SPs1686"/>
<dbReference type="HOGENOM" id="CLU_061901_4_0_9"/>
<dbReference type="GO" id="GO:0046872">
    <property type="term" value="F:metal ion binding"/>
    <property type="evidence" value="ECO:0007669"/>
    <property type="project" value="UniProtKB-KW"/>
</dbReference>
<dbReference type="GO" id="GO:0042586">
    <property type="term" value="F:peptide deformylase activity"/>
    <property type="evidence" value="ECO:0007669"/>
    <property type="project" value="UniProtKB-UniRule"/>
</dbReference>
<dbReference type="GO" id="GO:0043686">
    <property type="term" value="P:co-translational protein modification"/>
    <property type="evidence" value="ECO:0007669"/>
    <property type="project" value="TreeGrafter"/>
</dbReference>
<dbReference type="GO" id="GO:0006412">
    <property type="term" value="P:translation"/>
    <property type="evidence" value="ECO:0007669"/>
    <property type="project" value="UniProtKB-UniRule"/>
</dbReference>
<dbReference type="CDD" id="cd00487">
    <property type="entry name" value="Pep_deformylase"/>
    <property type="match status" value="1"/>
</dbReference>
<dbReference type="FunFam" id="3.90.45.10:FF:000002">
    <property type="entry name" value="Peptide deformylase"/>
    <property type="match status" value="1"/>
</dbReference>
<dbReference type="Gene3D" id="3.90.45.10">
    <property type="entry name" value="Peptide deformylase"/>
    <property type="match status" value="1"/>
</dbReference>
<dbReference type="HAMAP" id="MF_00163">
    <property type="entry name" value="Pep_deformylase"/>
    <property type="match status" value="1"/>
</dbReference>
<dbReference type="InterPro" id="IPR023635">
    <property type="entry name" value="Peptide_deformylase"/>
</dbReference>
<dbReference type="InterPro" id="IPR036821">
    <property type="entry name" value="Peptide_deformylase_sf"/>
</dbReference>
<dbReference type="NCBIfam" id="TIGR00079">
    <property type="entry name" value="pept_deformyl"/>
    <property type="match status" value="1"/>
</dbReference>
<dbReference type="PANTHER" id="PTHR10458">
    <property type="entry name" value="PEPTIDE DEFORMYLASE"/>
    <property type="match status" value="1"/>
</dbReference>
<dbReference type="PANTHER" id="PTHR10458:SF8">
    <property type="entry name" value="PEPTIDE DEFORMYLASE 2"/>
    <property type="match status" value="1"/>
</dbReference>
<dbReference type="Pfam" id="PF01327">
    <property type="entry name" value="Pep_deformylase"/>
    <property type="match status" value="1"/>
</dbReference>
<dbReference type="PIRSF" id="PIRSF004749">
    <property type="entry name" value="Pep_def"/>
    <property type="match status" value="1"/>
</dbReference>
<dbReference type="PRINTS" id="PR01576">
    <property type="entry name" value="PDEFORMYLASE"/>
</dbReference>
<dbReference type="SUPFAM" id="SSF56420">
    <property type="entry name" value="Peptide deformylase"/>
    <property type="match status" value="1"/>
</dbReference>
<feature type="chain" id="PRO_0000411436" description="Peptide deformylase">
    <location>
        <begin position="1"/>
        <end position="204"/>
    </location>
</feature>
<feature type="active site" evidence="1">
    <location>
        <position position="175"/>
    </location>
</feature>
<feature type="binding site" evidence="1">
    <location>
        <position position="131"/>
    </location>
    <ligand>
        <name>Fe cation</name>
        <dbReference type="ChEBI" id="CHEBI:24875"/>
    </ligand>
</feature>
<feature type="binding site" evidence="1">
    <location>
        <position position="174"/>
    </location>
    <ligand>
        <name>Fe cation</name>
        <dbReference type="ChEBI" id="CHEBI:24875"/>
    </ligand>
</feature>
<feature type="binding site" evidence="1">
    <location>
        <position position="178"/>
    </location>
    <ligand>
        <name>Fe cation</name>
        <dbReference type="ChEBI" id="CHEBI:24875"/>
    </ligand>
</feature>
<reference key="1">
    <citation type="journal article" date="2003" name="Genome Res.">
        <title>Genome sequence of an M3 strain of Streptococcus pyogenes reveals a large-scale genomic rearrangement in invasive strains and new insights into phage evolution.</title>
        <authorList>
            <person name="Nakagawa I."/>
            <person name="Kurokawa K."/>
            <person name="Yamashita A."/>
            <person name="Nakata M."/>
            <person name="Tomiyasu Y."/>
            <person name="Okahashi N."/>
            <person name="Kawabata S."/>
            <person name="Yamazaki K."/>
            <person name="Shiba T."/>
            <person name="Yasunaga T."/>
            <person name="Hayashi H."/>
            <person name="Hattori M."/>
            <person name="Hamada S."/>
        </authorList>
    </citation>
    <scope>NUCLEOTIDE SEQUENCE [LARGE SCALE GENOMIC DNA]</scope>
    <source>
        <strain>SSI-1</strain>
    </source>
</reference>
<keyword id="KW-0378">Hydrolase</keyword>
<keyword id="KW-0408">Iron</keyword>
<keyword id="KW-0479">Metal-binding</keyword>
<keyword id="KW-0648">Protein biosynthesis</keyword>